<proteinExistence type="evidence at protein level"/>
<organism>
    <name type="scientific">Rattus norvegicus</name>
    <name type="common">Rat</name>
    <dbReference type="NCBI Taxonomy" id="10116"/>
    <lineage>
        <taxon>Eukaryota</taxon>
        <taxon>Metazoa</taxon>
        <taxon>Chordata</taxon>
        <taxon>Craniata</taxon>
        <taxon>Vertebrata</taxon>
        <taxon>Euteleostomi</taxon>
        <taxon>Mammalia</taxon>
        <taxon>Eutheria</taxon>
        <taxon>Euarchontoglires</taxon>
        <taxon>Glires</taxon>
        <taxon>Rodentia</taxon>
        <taxon>Myomorpha</taxon>
        <taxon>Muroidea</taxon>
        <taxon>Muridae</taxon>
        <taxon>Murinae</taxon>
        <taxon>Rattus</taxon>
    </lineage>
</organism>
<dbReference type="EMBL" id="U19181">
    <property type="protein sequence ID" value="AAA67890.1"/>
    <property type="molecule type" value="mRNA"/>
</dbReference>
<dbReference type="EMBL" id="AABR07057194">
    <property type="status" value="NOT_ANNOTATED_CDS"/>
    <property type="molecule type" value="Genomic_DNA"/>
</dbReference>
<dbReference type="EMBL" id="BC127500">
    <property type="protein sequence ID" value="AAI27501.1"/>
    <property type="molecule type" value="mRNA"/>
</dbReference>
<dbReference type="EMBL" id="CH473960">
    <property type="protein sequence ID" value="EDM16646.1"/>
    <property type="molecule type" value="Genomic_DNA"/>
</dbReference>
<dbReference type="EMBL" id="CH473960">
    <property type="protein sequence ID" value="EDM16647.1"/>
    <property type="molecule type" value="Genomic_DNA"/>
</dbReference>
<dbReference type="PIR" id="I57546">
    <property type="entry name" value="I57546"/>
</dbReference>
<dbReference type="RefSeq" id="NP_059009.2">
    <property type="nucleotide sequence ID" value="NM_017313.3"/>
</dbReference>
<dbReference type="RefSeq" id="XP_006241419.1">
    <property type="nucleotide sequence ID" value="XM_006241357.5"/>
</dbReference>
<dbReference type="RefSeq" id="XP_006241420.1">
    <property type="nucleotide sequence ID" value="XM_006241358.2"/>
</dbReference>
<dbReference type="RefSeq" id="XP_006241421.1">
    <property type="nucleotide sequence ID" value="XM_006241359.3"/>
</dbReference>
<dbReference type="RefSeq" id="XP_006241422.1">
    <property type="nucleotide sequence ID" value="XM_006241360.4"/>
</dbReference>
<dbReference type="RefSeq" id="XP_063119212.1">
    <property type="nucleotide sequence ID" value="XM_063263142.1"/>
</dbReference>
<dbReference type="SMR" id="Q62739"/>
<dbReference type="FunCoup" id="Q62739">
    <property type="interactions" value="219"/>
</dbReference>
<dbReference type="IntAct" id="Q62739">
    <property type="interactions" value="4"/>
</dbReference>
<dbReference type="MINT" id="Q62739"/>
<dbReference type="STRING" id="10116.ENSRNOP00000007258"/>
<dbReference type="iPTMnet" id="Q62739"/>
<dbReference type="PhosphoSitePlus" id="Q62739"/>
<dbReference type="jPOST" id="Q62739"/>
<dbReference type="PaxDb" id="10116-ENSRNOP00000007258"/>
<dbReference type="Ensembl" id="ENSRNOT00000007258.6">
    <property type="protein sequence ID" value="ENSRNOP00000007258.4"/>
    <property type="gene ID" value="ENSRNOG00000005362.7"/>
</dbReference>
<dbReference type="GeneID" id="29885"/>
<dbReference type="KEGG" id="rno:29885"/>
<dbReference type="UCSC" id="RGD:620650">
    <property type="organism name" value="rat"/>
</dbReference>
<dbReference type="AGR" id="RGD:620650"/>
<dbReference type="CTD" id="117177"/>
<dbReference type="RGD" id="620650">
    <property type="gene designation" value="Rab3ip"/>
</dbReference>
<dbReference type="eggNOG" id="KOG4324">
    <property type="taxonomic scope" value="Eukaryota"/>
</dbReference>
<dbReference type="GeneTree" id="ENSGT00940000157998"/>
<dbReference type="HOGENOM" id="CLU_038204_2_0_1"/>
<dbReference type="InParanoid" id="Q62739"/>
<dbReference type="OMA" id="WEIMQLR"/>
<dbReference type="OrthoDB" id="5560525at2759"/>
<dbReference type="PhylomeDB" id="Q62739"/>
<dbReference type="TreeFam" id="TF313748"/>
<dbReference type="Reactome" id="R-RNO-5620912">
    <property type="pathway name" value="Anchoring of the basal body to the plasma membrane"/>
</dbReference>
<dbReference type="Reactome" id="R-RNO-5620916">
    <property type="pathway name" value="VxPx cargo-targeting to cilium"/>
</dbReference>
<dbReference type="Reactome" id="R-RNO-5620922">
    <property type="pathway name" value="BBSome-mediated cargo-targeting to cilium"/>
</dbReference>
<dbReference type="Reactome" id="R-RNO-8876198">
    <property type="pathway name" value="RAB GEFs exchange GTP for GDP on RABs"/>
</dbReference>
<dbReference type="PRO" id="PR:Q62739"/>
<dbReference type="Proteomes" id="UP000002494">
    <property type="component" value="Chromosome 7"/>
</dbReference>
<dbReference type="Proteomes" id="UP000234681">
    <property type="component" value="Chromosome 7"/>
</dbReference>
<dbReference type="Bgee" id="ENSRNOG00000005362">
    <property type="expression patterns" value="Expressed in kidney and 20 other cell types or tissues"/>
</dbReference>
<dbReference type="GO" id="GO:0005813">
    <property type="term" value="C:centrosome"/>
    <property type="evidence" value="ECO:0007669"/>
    <property type="project" value="Ensembl"/>
</dbReference>
<dbReference type="GO" id="GO:0005829">
    <property type="term" value="C:cytosol"/>
    <property type="evidence" value="ECO:0000314"/>
    <property type="project" value="UniProtKB"/>
</dbReference>
<dbReference type="GO" id="GO:0030027">
    <property type="term" value="C:lamellipodium"/>
    <property type="evidence" value="ECO:0007669"/>
    <property type="project" value="UniProtKB-SubCell"/>
</dbReference>
<dbReference type="GO" id="GO:0005654">
    <property type="term" value="C:nucleoplasm"/>
    <property type="evidence" value="ECO:0007669"/>
    <property type="project" value="Ensembl"/>
</dbReference>
<dbReference type="GO" id="GO:0005634">
    <property type="term" value="C:nucleus"/>
    <property type="evidence" value="ECO:0000250"/>
    <property type="project" value="UniProtKB"/>
</dbReference>
<dbReference type="GO" id="GO:0048471">
    <property type="term" value="C:perinuclear region of cytoplasm"/>
    <property type="evidence" value="ECO:0000314"/>
    <property type="project" value="RGD"/>
</dbReference>
<dbReference type="GO" id="GO:1990635">
    <property type="term" value="C:proximal dendrite"/>
    <property type="evidence" value="ECO:0000314"/>
    <property type="project" value="RGD"/>
</dbReference>
<dbReference type="GO" id="GO:0051020">
    <property type="term" value="F:GTPase binding"/>
    <property type="evidence" value="ECO:0000353"/>
    <property type="project" value="RGD"/>
</dbReference>
<dbReference type="GO" id="GO:0005085">
    <property type="term" value="F:guanyl-nucleotide exchange factor activity"/>
    <property type="evidence" value="ECO:0000314"/>
    <property type="project" value="RGD"/>
</dbReference>
<dbReference type="GO" id="GO:0042802">
    <property type="term" value="F:identical protein binding"/>
    <property type="evidence" value="ECO:0000250"/>
    <property type="project" value="UniProtKB"/>
</dbReference>
<dbReference type="GO" id="GO:0031267">
    <property type="term" value="F:small GTPase binding"/>
    <property type="evidence" value="ECO:0000250"/>
    <property type="project" value="UniProtKB"/>
</dbReference>
<dbReference type="GO" id="GO:0051490">
    <property type="term" value="P:negative regulation of filopodium assembly"/>
    <property type="evidence" value="ECO:0000315"/>
    <property type="project" value="RGD"/>
</dbReference>
<dbReference type="GO" id="GO:0045724">
    <property type="term" value="P:positive regulation of cilium assembly"/>
    <property type="evidence" value="ECO:0000266"/>
    <property type="project" value="RGD"/>
</dbReference>
<dbReference type="GO" id="GO:0120229">
    <property type="term" value="P:protein localization to motile cilium"/>
    <property type="evidence" value="ECO:0000266"/>
    <property type="project" value="RGD"/>
</dbReference>
<dbReference type="GO" id="GO:0006612">
    <property type="term" value="P:protein targeting to membrane"/>
    <property type="evidence" value="ECO:0000266"/>
    <property type="project" value="RGD"/>
</dbReference>
<dbReference type="GO" id="GO:0015031">
    <property type="term" value="P:protein transport"/>
    <property type="evidence" value="ECO:0007669"/>
    <property type="project" value="UniProtKB-KW"/>
</dbReference>
<dbReference type="CDD" id="cd21068">
    <property type="entry name" value="Rab11BD_RAB3IP"/>
    <property type="match status" value="1"/>
</dbReference>
<dbReference type="FunFam" id="1.20.5.4880:FF:000001">
    <property type="entry name" value="Guanine nucleotide exchange factor for Rab-3A"/>
    <property type="match status" value="1"/>
</dbReference>
<dbReference type="Gene3D" id="1.20.5.4880">
    <property type="match status" value="1"/>
</dbReference>
<dbReference type="InterPro" id="IPR040351">
    <property type="entry name" value="RAB3IL/RAB3IP/Sec2"/>
</dbReference>
<dbReference type="InterPro" id="IPR009449">
    <property type="entry name" value="Sec2_N"/>
</dbReference>
<dbReference type="PANTHER" id="PTHR14430:SF2">
    <property type="entry name" value="RAB-3A-INTERACTING PROTEIN"/>
    <property type="match status" value="1"/>
</dbReference>
<dbReference type="PANTHER" id="PTHR14430">
    <property type="entry name" value="RABIN3-RELATED"/>
    <property type="match status" value="1"/>
</dbReference>
<dbReference type="Pfam" id="PF06428">
    <property type="entry name" value="Sec2p"/>
    <property type="match status" value="1"/>
</dbReference>
<dbReference type="SUPFAM" id="SSF144284">
    <property type="entry name" value="Sec2 N-terminal region"/>
    <property type="match status" value="1"/>
</dbReference>
<protein>
    <recommendedName>
        <fullName>Rab-3A-interacting protein</fullName>
        <shortName>Rab3A-interacting protein</shortName>
    </recommendedName>
    <alternativeName>
        <fullName>Rabin-3</fullName>
    </alternativeName>
    <alternativeName>
        <fullName>SSX2-interacting protein</fullName>
    </alternativeName>
</protein>
<gene>
    <name type="primary">Rab3ip</name>
    <name type="synonym">Rabin3</name>
    <name type="synonym">Rabin8</name>
</gene>
<reference key="1">
    <citation type="journal article" date="1995" name="Mol. Cell. Biol.">
        <title>Interaction cloning of Rabin3, a novel protein that associates with the Ras-like GTPase Rab3A.</title>
        <authorList>
            <person name="Brondyk W.H."/>
            <person name="McKiernan C.J."/>
            <person name="Fortner K.A."/>
            <person name="Stabila P."/>
            <person name="Holz R.W."/>
            <person name="Macara I.G."/>
        </authorList>
    </citation>
    <scope>NUCLEOTIDE SEQUENCE [MRNA]</scope>
    <scope>INTERACTION WITH RAB3A AND RAB3D</scope>
    <scope>SUBCELLULAR LOCATION</scope>
    <scope>TISSUE SPECIFICITY</scope>
    <source>
        <strain evidence="8">Fischer 344</strain>
        <tissue evidence="8">Brain</tissue>
    </source>
</reference>
<reference key="2">
    <citation type="journal article" date="2004" name="Nature">
        <title>Genome sequence of the Brown Norway rat yields insights into mammalian evolution.</title>
        <authorList>
            <person name="Gibbs R.A."/>
            <person name="Weinstock G.M."/>
            <person name="Metzker M.L."/>
            <person name="Muzny D.M."/>
            <person name="Sodergren E.J."/>
            <person name="Scherer S."/>
            <person name="Scott G."/>
            <person name="Steffen D."/>
            <person name="Worley K.C."/>
            <person name="Burch P.E."/>
            <person name="Okwuonu G."/>
            <person name="Hines S."/>
            <person name="Lewis L."/>
            <person name="Deramo C."/>
            <person name="Delgado O."/>
            <person name="Dugan-Rocha S."/>
            <person name="Miner G."/>
            <person name="Morgan M."/>
            <person name="Hawes A."/>
            <person name="Gill R."/>
            <person name="Holt R.A."/>
            <person name="Adams M.D."/>
            <person name="Amanatides P.G."/>
            <person name="Baden-Tillson H."/>
            <person name="Barnstead M."/>
            <person name="Chin S."/>
            <person name="Evans C.A."/>
            <person name="Ferriera S."/>
            <person name="Fosler C."/>
            <person name="Glodek A."/>
            <person name="Gu Z."/>
            <person name="Jennings D."/>
            <person name="Kraft C.L."/>
            <person name="Nguyen T."/>
            <person name="Pfannkoch C.M."/>
            <person name="Sitter C."/>
            <person name="Sutton G.G."/>
            <person name="Venter J.C."/>
            <person name="Woodage T."/>
            <person name="Smith D."/>
            <person name="Lee H.-M."/>
            <person name="Gustafson E."/>
            <person name="Cahill P."/>
            <person name="Kana A."/>
            <person name="Doucette-Stamm L."/>
            <person name="Weinstock K."/>
            <person name="Fechtel K."/>
            <person name="Weiss R.B."/>
            <person name="Dunn D.M."/>
            <person name="Green E.D."/>
            <person name="Blakesley R.W."/>
            <person name="Bouffard G.G."/>
            <person name="De Jong P.J."/>
            <person name="Osoegawa K."/>
            <person name="Zhu B."/>
            <person name="Marra M."/>
            <person name="Schein J."/>
            <person name="Bosdet I."/>
            <person name="Fjell C."/>
            <person name="Jones S."/>
            <person name="Krzywinski M."/>
            <person name="Mathewson C."/>
            <person name="Siddiqui A."/>
            <person name="Wye N."/>
            <person name="McPherson J."/>
            <person name="Zhao S."/>
            <person name="Fraser C.M."/>
            <person name="Shetty J."/>
            <person name="Shatsman S."/>
            <person name="Geer K."/>
            <person name="Chen Y."/>
            <person name="Abramzon S."/>
            <person name="Nierman W.C."/>
            <person name="Havlak P.H."/>
            <person name="Chen R."/>
            <person name="Durbin K.J."/>
            <person name="Egan A."/>
            <person name="Ren Y."/>
            <person name="Song X.-Z."/>
            <person name="Li B."/>
            <person name="Liu Y."/>
            <person name="Qin X."/>
            <person name="Cawley S."/>
            <person name="Cooney A.J."/>
            <person name="D'Souza L.M."/>
            <person name="Martin K."/>
            <person name="Wu J.Q."/>
            <person name="Gonzalez-Garay M.L."/>
            <person name="Jackson A.R."/>
            <person name="Kalafus K.J."/>
            <person name="McLeod M.P."/>
            <person name="Milosavljevic A."/>
            <person name="Virk D."/>
            <person name="Volkov A."/>
            <person name="Wheeler D.A."/>
            <person name="Zhang Z."/>
            <person name="Bailey J.A."/>
            <person name="Eichler E.E."/>
            <person name="Tuzun E."/>
            <person name="Birney E."/>
            <person name="Mongin E."/>
            <person name="Ureta-Vidal A."/>
            <person name="Woodwark C."/>
            <person name="Zdobnov E."/>
            <person name="Bork P."/>
            <person name="Suyama M."/>
            <person name="Torrents D."/>
            <person name="Alexandersson M."/>
            <person name="Trask B.J."/>
            <person name="Young J.M."/>
            <person name="Huang H."/>
            <person name="Wang H."/>
            <person name="Xing H."/>
            <person name="Daniels S."/>
            <person name="Gietzen D."/>
            <person name="Schmidt J."/>
            <person name="Stevens K."/>
            <person name="Vitt U."/>
            <person name="Wingrove J."/>
            <person name="Camara F."/>
            <person name="Mar Alba M."/>
            <person name="Abril J.F."/>
            <person name="Guigo R."/>
            <person name="Smit A."/>
            <person name="Dubchak I."/>
            <person name="Rubin E.M."/>
            <person name="Couronne O."/>
            <person name="Poliakov A."/>
            <person name="Huebner N."/>
            <person name="Ganten D."/>
            <person name="Goesele C."/>
            <person name="Hummel O."/>
            <person name="Kreitler T."/>
            <person name="Lee Y.-A."/>
            <person name="Monti J."/>
            <person name="Schulz H."/>
            <person name="Zimdahl H."/>
            <person name="Himmelbauer H."/>
            <person name="Lehrach H."/>
            <person name="Jacob H.J."/>
            <person name="Bromberg S."/>
            <person name="Gullings-Handley J."/>
            <person name="Jensen-Seaman M.I."/>
            <person name="Kwitek A.E."/>
            <person name="Lazar J."/>
            <person name="Pasko D."/>
            <person name="Tonellato P.J."/>
            <person name="Twigger S."/>
            <person name="Ponting C.P."/>
            <person name="Duarte J.M."/>
            <person name="Rice S."/>
            <person name="Goodstadt L."/>
            <person name="Beatson S.A."/>
            <person name="Emes R.D."/>
            <person name="Winter E.E."/>
            <person name="Webber C."/>
            <person name="Brandt P."/>
            <person name="Nyakatura G."/>
            <person name="Adetobi M."/>
            <person name="Chiaromonte F."/>
            <person name="Elnitski L."/>
            <person name="Eswara P."/>
            <person name="Hardison R.C."/>
            <person name="Hou M."/>
            <person name="Kolbe D."/>
            <person name="Makova K."/>
            <person name="Miller W."/>
            <person name="Nekrutenko A."/>
            <person name="Riemer C."/>
            <person name="Schwartz S."/>
            <person name="Taylor J."/>
            <person name="Yang S."/>
            <person name="Zhang Y."/>
            <person name="Lindpaintner K."/>
            <person name="Andrews T.D."/>
            <person name="Caccamo M."/>
            <person name="Clamp M."/>
            <person name="Clarke L."/>
            <person name="Curwen V."/>
            <person name="Durbin R.M."/>
            <person name="Eyras E."/>
            <person name="Searle S.M."/>
            <person name="Cooper G.M."/>
            <person name="Batzoglou S."/>
            <person name="Brudno M."/>
            <person name="Sidow A."/>
            <person name="Stone E.A."/>
            <person name="Payseur B.A."/>
            <person name="Bourque G."/>
            <person name="Lopez-Otin C."/>
            <person name="Puente X.S."/>
            <person name="Chakrabarti K."/>
            <person name="Chatterji S."/>
            <person name="Dewey C."/>
            <person name="Pachter L."/>
            <person name="Bray N."/>
            <person name="Yap V.B."/>
            <person name="Caspi A."/>
            <person name="Tesler G."/>
            <person name="Pevzner P.A."/>
            <person name="Haussler D."/>
            <person name="Roskin K.M."/>
            <person name="Baertsch R."/>
            <person name="Clawson H."/>
            <person name="Furey T.S."/>
            <person name="Hinrichs A.S."/>
            <person name="Karolchik D."/>
            <person name="Kent W.J."/>
            <person name="Rosenbloom K.R."/>
            <person name="Trumbower H."/>
            <person name="Weirauch M."/>
            <person name="Cooper D.N."/>
            <person name="Stenson P.D."/>
            <person name="Ma B."/>
            <person name="Brent M."/>
            <person name="Arumugam M."/>
            <person name="Shteynberg D."/>
            <person name="Copley R.R."/>
            <person name="Taylor M.S."/>
            <person name="Riethman H."/>
            <person name="Mudunuri U."/>
            <person name="Peterson J."/>
            <person name="Guyer M."/>
            <person name="Felsenfeld A."/>
            <person name="Old S."/>
            <person name="Mockrin S."/>
            <person name="Collins F.S."/>
        </authorList>
    </citation>
    <scope>NUCLEOTIDE SEQUENCE [LARGE SCALE GENOMIC DNA]</scope>
    <source>
        <strain>Brown Norway</strain>
    </source>
</reference>
<reference key="3">
    <citation type="submission" date="2005-09" db="EMBL/GenBank/DDBJ databases">
        <authorList>
            <person name="Mural R.J."/>
            <person name="Adams M.D."/>
            <person name="Myers E.W."/>
            <person name="Smith H.O."/>
            <person name="Venter J.C."/>
        </authorList>
    </citation>
    <scope>NUCLEOTIDE SEQUENCE [LARGE SCALE GENOMIC DNA]</scope>
</reference>
<reference key="4">
    <citation type="journal article" date="2004" name="Genome Res.">
        <title>The status, quality, and expansion of the NIH full-length cDNA project: the Mammalian Gene Collection (MGC).</title>
        <authorList>
            <consortium name="The MGC Project Team"/>
        </authorList>
    </citation>
    <scope>NUCLEOTIDE SEQUENCE [LARGE SCALE MRNA]</scope>
    <source>
        <tissue evidence="9">Testis</tissue>
    </source>
</reference>
<reference evidence="10" key="5">
    <citation type="journal article" date="2012" name="Nat. Commun.">
        <title>Quantitative maps of protein phosphorylation sites across 14 different rat organs and tissues.</title>
        <authorList>
            <person name="Lundby A."/>
            <person name="Secher A."/>
            <person name="Lage K."/>
            <person name="Nordsborg N.B."/>
            <person name="Dmytriyev A."/>
            <person name="Lundby C."/>
            <person name="Olsen J.V."/>
        </authorList>
    </citation>
    <scope>IDENTIFICATION BY MASS SPECTROMETRY [LARGE SCALE ANALYSIS]</scope>
</reference>
<reference key="6">
    <citation type="journal article" date="2002" name="Mol. Biol. Cell">
        <title>A Rab8-specific GDP/GTP exchange factor is involved in actin remodeling and polarized membrane transport.</title>
        <authorList>
            <person name="Hattula K."/>
            <person name="Furuhjelm J."/>
            <person name="Arffman A."/>
            <person name="Peranen J."/>
        </authorList>
    </citation>
    <scope>FUNCTION</scope>
</reference>
<accession>Q62739</accession>
<accession>A1L127</accession>
<sequence>MANDPLEGFHEVNLASPTSPDLLGVCDPGTQEQTTSPSVIYRPHPSTLCSATIQANALNLSDLPTQPVYSSPRHLNCAEISNISIHVPEPASSVASEVAAGLTRFTSRKDSCNAEREFLQGATVTEASAGNDDIFGLSTDSLSRLRSPSVLEVREKGYERLKEELAKAQRELKLKDEECERLSKVRDQLGQELEELTASLFEEAHKMVREANVKQATAEKQLKEAQGKIDVLQAEVAALKTLVLSSSPTSPTQEPLAAGKTPFKRGHTRNKSTSSAMSGSHQDFSAIQPIVKDCREADLSLYNEFRSWKDEPTMDRTCPFLDKIYQEDIFPCLTFAKSELASAVLEAVENNTLSIEPVGLQPIRFVKASAVECGGPKKCALTGQSKPCKHRIKLGDSSSYYYISPVCRYRITSVCNFFTYIRYIQQGLVKQQDVDQMFWEVMQLRKEMSLAKLGYFKEEL</sequence>
<name>RAB3I_RAT</name>
<keyword id="KW-0966">Cell projection</keyword>
<keyword id="KW-0175">Coiled coil</keyword>
<keyword id="KW-0963">Cytoplasm</keyword>
<keyword id="KW-0206">Cytoskeleton</keyword>
<keyword id="KW-0344">Guanine-nucleotide releasing factor</keyword>
<keyword id="KW-0539">Nucleus</keyword>
<keyword id="KW-0597">Phosphoprotein</keyword>
<keyword id="KW-0653">Protein transport</keyword>
<keyword id="KW-1185">Reference proteome</keyword>
<keyword id="KW-0813">Transport</keyword>
<comment type="function">
    <text evidence="3 6">Guanine nucleotide exchange factor (GEF) which may activate RAB8A and RAB8B (PubMed:12221131). Promotes the exchange of GDP to GTP, converting inactive GDP-bound Rab proteins into their active GTP-bound form (PubMed:12221131). Mediates the release of GDP from RAB8A and RAB8B but not from RAB3A or RAB5 (By similarity). Modulates actin organization and promotes polarized transport of RAB8A-specific vesicles to the cell surface (PubMed:12221131). Together with RAB11A, RAB8A, the exocyst complex, PARD3, PRKCI, ANXA2, CDC42 and DNMBP promotes transcytosis of PODXL to the apical membrane initiation sites (AMIS), apical surface formation and lumenogenesis (By similarity). Together with RAB11A and FIP3/RAB11FIP3, parts of the ciliary targeting complex that promotes preciliary vesicle trafficking to mother centriole and ciliogenesis initiation. Part of the ciliary targeting complex containing Rab11, ASAP1, RAB3IP and RAB11FIP3 and ARF4 that promotes RAB3IP preciliary vesicle trafficking to mother centriole and ciliogenesis initiation (By similarity).</text>
</comment>
<comment type="subunit">
    <text evidence="3 7">Homodimer (By similarity). Interacts with the N-terminal region of SSX2 (By similarity). Interacts with the GDP-bound forms of RAB8A and RAB8B (By similarity). The interaction with RAB8A is prevented by phosphorylation of RAB8A at 'Thr-72' (By similarity). Interacts with the GDP-bound forms of RAB3A and RAB3D (PubMed:7532276). Interacts with DCDC1 (By similarity) (PubMed:7532276). Interacts (via the N-terminal region) with TRAPPC14; this interaction mediates RAB3IP association with the TRAPP II complex (By similarity). Forms a heterotetramer with RAB11A where RAB3IP homodimer binds two RAB11A subunits. Forms a complex with RAB11A and RAB11FIP3, probably a heterohexamer with two of each protein subunit, where Rabin8/RAB3IP and RAB11FIP3 simultaneously bind to RAB11A; the complex promotes preciliary trafficking. Forms a complex containing RAB11A, ASAP1, RAB3IP, RAP11FIP3 and ARF4; the complex promotes preciliary trafficking; the complex binds to RHO in photoreceptor cells and promotes RHO ciliary transport (By similarity).</text>
</comment>
<comment type="interaction">
    <interactant intactId="EBI-2028671">
        <id>Q62739</id>
    </interactant>
    <interactant intactId="EBI-9202179">
        <id>Q8R313</id>
        <label>Exoc6</label>
    </interactant>
    <organismsDiffer>true</organismsDiffer>
    <experiments>2</experiments>
</comment>
<comment type="interaction">
    <interactant intactId="EBI-2028671">
        <id>Q62739</id>
    </interactant>
    <interactant intactId="EBI-770256">
        <id>P62492</id>
        <label>Rab11a</label>
    </interactant>
    <organismsDiffer>true</organismsDiffer>
    <experiments>4</experiments>
</comment>
<comment type="subcellular location">
    <subcellularLocation>
        <location evidence="7">Cytoplasm</location>
    </subcellularLocation>
    <subcellularLocation>
        <location evidence="1">Nucleus</location>
    </subcellularLocation>
    <subcellularLocation>
        <location evidence="1">Cytoplasm</location>
        <location evidence="1">Cytoskeleton</location>
    </subcellularLocation>
    <subcellularLocation>
        <location evidence="1">Cell projection</location>
        <location evidence="1">Lamellipodium</location>
    </subcellularLocation>
    <text evidence="1">Predominantly cytoplasmic but a small proportion colocalizes with SSX2 in the nucleus. Activation of protein kinase C results in redistribution to the periphery of lamellipodia. In the cytoskeleton, localizes to cortical actin (By similarity).</text>
</comment>
<comment type="tissue specificity">
    <text evidence="7">Ubiquitously expressed. Expressed at highest level in testis.</text>
</comment>
<comment type="similarity">
    <text evidence="4">Belongs to the SEC2 family.</text>
</comment>
<evidence type="ECO:0000250" key="1"/>
<evidence type="ECO:0000250" key="2">
    <source>
        <dbReference type="UniProtKB" id="Q68EF0"/>
    </source>
</evidence>
<evidence type="ECO:0000250" key="3">
    <source>
        <dbReference type="UniProtKB" id="Q96QF0"/>
    </source>
</evidence>
<evidence type="ECO:0000255" key="4"/>
<evidence type="ECO:0000256" key="5">
    <source>
        <dbReference type="SAM" id="MobiDB-lite"/>
    </source>
</evidence>
<evidence type="ECO:0000269" key="6">
    <source>
    </source>
</evidence>
<evidence type="ECO:0000269" key="7">
    <source>
    </source>
</evidence>
<evidence type="ECO:0000312" key="8">
    <source>
        <dbReference type="EMBL" id="AAA67890.1"/>
    </source>
</evidence>
<evidence type="ECO:0000312" key="9">
    <source>
        <dbReference type="EMBL" id="AAI27501.1"/>
    </source>
</evidence>
<evidence type="ECO:0007744" key="10">
    <source>
    </source>
</evidence>
<feature type="chain" id="PRO_0000097146" description="Rab-3A-interacting protein">
    <location>
        <begin position="1"/>
        <end position="460"/>
    </location>
</feature>
<feature type="region of interest" description="Disordered" evidence="5">
    <location>
        <begin position="246"/>
        <end position="280"/>
    </location>
</feature>
<feature type="coiled-coil region" evidence="4">
    <location>
        <begin position="149"/>
        <end position="244"/>
    </location>
</feature>
<feature type="compositionally biased region" description="Polar residues" evidence="5">
    <location>
        <begin position="271"/>
        <end position="280"/>
    </location>
</feature>
<feature type="modified residue" description="Phosphoserine" evidence="3">
    <location>
        <position position="147"/>
    </location>
</feature>
<feature type="modified residue" description="Phosphoserine" evidence="3">
    <location>
        <position position="149"/>
    </location>
</feature>
<feature type="modified residue" description="Phosphoserine" evidence="2">
    <location>
        <position position="247"/>
    </location>
</feature>
<feature type="modified residue" description="Phosphoserine" evidence="3">
    <location>
        <position position="250"/>
    </location>
</feature>
<feature type="modified residue" description="Phosphoserine" evidence="3">
    <location>
        <position position="272"/>
    </location>
</feature>
<feature type="modified residue" description="Phosphoserine" evidence="2">
    <location>
        <position position="280"/>
    </location>
</feature>
<feature type="sequence conflict" description="In Ref. 1; AAA67890." ref="1">
    <original>A</original>
    <variation>D</variation>
    <location>
        <position position="258"/>
    </location>
</feature>
<feature type="sequence conflict" description="In Ref. 1; AAA67890." ref="1">
    <original>R</original>
    <variation>G</variation>
    <location>
        <position position="265"/>
    </location>
</feature>
<feature type="sequence conflict" description="In Ref. 1; AAA67890." ref="1">
    <original>P</original>
    <variation>A</variation>
    <location>
        <position position="289"/>
    </location>
</feature>